<name>PSBE_NICSY</name>
<feature type="chain" id="PRO_0000233206" description="Cytochrome b559 subunit alpha">
    <location>
        <begin position="1"/>
        <end position="83"/>
    </location>
</feature>
<feature type="transmembrane region" description="Helical" evidence="1">
    <location>
        <begin position="21"/>
        <end position="35"/>
    </location>
</feature>
<feature type="binding site" description="axial binding residue" evidence="1">
    <location>
        <position position="23"/>
    </location>
    <ligand>
        <name>heme</name>
        <dbReference type="ChEBI" id="CHEBI:30413"/>
        <note>ligand shared with beta subunit</note>
    </ligand>
    <ligandPart>
        <name>Fe</name>
        <dbReference type="ChEBI" id="CHEBI:18248"/>
    </ligandPart>
</feature>
<protein>
    <recommendedName>
        <fullName evidence="1">Cytochrome b559 subunit alpha</fullName>
    </recommendedName>
    <alternativeName>
        <fullName evidence="1">PSII reaction center subunit V</fullName>
    </alternativeName>
</protein>
<comment type="function">
    <text evidence="1">This b-type cytochrome is tightly associated with the reaction center of photosystem II (PSII). PSII is a light-driven water:plastoquinone oxidoreductase that uses light energy to abstract electrons from H(2)O, generating O(2) and a proton gradient subsequently used for ATP formation. It consists of a core antenna complex that captures photons, and an electron transfer chain that converts photonic excitation into a charge separation.</text>
</comment>
<comment type="cofactor">
    <cofactor evidence="1">
        <name>heme b</name>
        <dbReference type="ChEBI" id="CHEBI:60344"/>
    </cofactor>
    <text evidence="1">With its partner (PsbF) binds heme. PSII binds additional chlorophylls, carotenoids and specific lipids.</text>
</comment>
<comment type="subunit">
    <text evidence="1">Heterodimer of an alpha subunit and a beta subunit. PSII is composed of 1 copy each of membrane proteins PsbA, PsbB, PsbC, PsbD, PsbE, PsbF, PsbH, PsbI, PsbJ, PsbK, PsbL, PsbM, PsbT, PsbX, PsbY, PsbZ, Psb30/Ycf12, at least 3 peripheral proteins of the oxygen-evolving complex and a large number of cofactors. It forms dimeric complexes.</text>
</comment>
<comment type="subcellular location">
    <subcellularLocation>
        <location evidence="1">Plastid</location>
        <location evidence="1">Chloroplast thylakoid membrane</location>
        <topology evidence="1">Single-pass membrane protein</topology>
    </subcellularLocation>
</comment>
<comment type="similarity">
    <text evidence="1">Belongs to the PsbE/PsbF family.</text>
</comment>
<reference key="1">
    <citation type="journal article" date="2006" name="Mol. Genet. Genomics">
        <title>The chloroplast genome of Nicotiana sylvestris and Nicotiana tomentosiformis: complete sequencing confirms that the Nicotiana sylvestris progenitor is the maternal genome donor of Nicotiana tabacum.</title>
        <authorList>
            <person name="Yukawa M."/>
            <person name="Tsudzuki T."/>
            <person name="Sugiura M."/>
        </authorList>
    </citation>
    <scope>NUCLEOTIDE SEQUENCE [LARGE SCALE GENOMIC DNA]</scope>
</reference>
<organism>
    <name type="scientific">Nicotiana sylvestris</name>
    <name type="common">Wood tobacco</name>
    <name type="synonym">South American tobacco</name>
    <dbReference type="NCBI Taxonomy" id="4096"/>
    <lineage>
        <taxon>Eukaryota</taxon>
        <taxon>Viridiplantae</taxon>
        <taxon>Streptophyta</taxon>
        <taxon>Embryophyta</taxon>
        <taxon>Tracheophyta</taxon>
        <taxon>Spermatophyta</taxon>
        <taxon>Magnoliopsida</taxon>
        <taxon>eudicotyledons</taxon>
        <taxon>Gunneridae</taxon>
        <taxon>Pentapetalae</taxon>
        <taxon>asterids</taxon>
        <taxon>lamiids</taxon>
        <taxon>Solanales</taxon>
        <taxon>Solanaceae</taxon>
        <taxon>Nicotianoideae</taxon>
        <taxon>Nicotianeae</taxon>
        <taxon>Nicotiana</taxon>
    </lineage>
</organism>
<accession>Q3C1L3</accession>
<evidence type="ECO:0000255" key="1">
    <source>
        <dbReference type="HAMAP-Rule" id="MF_00642"/>
    </source>
</evidence>
<geneLocation type="chloroplast"/>
<keyword id="KW-0150">Chloroplast</keyword>
<keyword id="KW-0249">Electron transport</keyword>
<keyword id="KW-0349">Heme</keyword>
<keyword id="KW-0408">Iron</keyword>
<keyword id="KW-0472">Membrane</keyword>
<keyword id="KW-0479">Metal-binding</keyword>
<keyword id="KW-0602">Photosynthesis</keyword>
<keyword id="KW-0604">Photosystem II</keyword>
<keyword id="KW-0934">Plastid</keyword>
<keyword id="KW-1185">Reference proteome</keyword>
<keyword id="KW-0793">Thylakoid</keyword>
<keyword id="KW-0812">Transmembrane</keyword>
<keyword id="KW-1133">Transmembrane helix</keyword>
<keyword id="KW-0813">Transport</keyword>
<sequence>MSGSTGERSFADIITSIRYWVIHSITIPSLFIAGWLFVSTGLAYDVFGSPRPNEYFTESRQGIPLITGRFDPLEQLDEFSRSF</sequence>
<dbReference type="EMBL" id="AB237912">
    <property type="protein sequence ID" value="BAE46670.1"/>
    <property type="molecule type" value="Genomic_DNA"/>
</dbReference>
<dbReference type="RefSeq" id="YP_358695.1">
    <property type="nucleotide sequence ID" value="NC_007500.1"/>
</dbReference>
<dbReference type="SMR" id="Q3C1L3"/>
<dbReference type="GeneID" id="3735105"/>
<dbReference type="KEGG" id="nsy:3735105"/>
<dbReference type="OrthoDB" id="17349at4085"/>
<dbReference type="Proteomes" id="UP000189701">
    <property type="component" value="Chloroplast Pltd"/>
</dbReference>
<dbReference type="GO" id="GO:0009535">
    <property type="term" value="C:chloroplast thylakoid membrane"/>
    <property type="evidence" value="ECO:0007669"/>
    <property type="project" value="UniProtKB-SubCell"/>
</dbReference>
<dbReference type="GO" id="GO:0009539">
    <property type="term" value="C:photosystem II reaction center"/>
    <property type="evidence" value="ECO:0007669"/>
    <property type="project" value="InterPro"/>
</dbReference>
<dbReference type="GO" id="GO:0009055">
    <property type="term" value="F:electron transfer activity"/>
    <property type="evidence" value="ECO:0007669"/>
    <property type="project" value="UniProtKB-UniRule"/>
</dbReference>
<dbReference type="GO" id="GO:0020037">
    <property type="term" value="F:heme binding"/>
    <property type="evidence" value="ECO:0007669"/>
    <property type="project" value="InterPro"/>
</dbReference>
<dbReference type="GO" id="GO:0005506">
    <property type="term" value="F:iron ion binding"/>
    <property type="evidence" value="ECO:0007669"/>
    <property type="project" value="UniProtKB-UniRule"/>
</dbReference>
<dbReference type="GO" id="GO:0009767">
    <property type="term" value="P:photosynthetic electron transport chain"/>
    <property type="evidence" value="ECO:0007669"/>
    <property type="project" value="InterPro"/>
</dbReference>
<dbReference type="Gene3D" id="1.20.5.860">
    <property type="entry name" value="Photosystem II cytochrome b559, alpha subunit"/>
    <property type="match status" value="1"/>
</dbReference>
<dbReference type="HAMAP" id="MF_00642">
    <property type="entry name" value="PSII_PsbE"/>
    <property type="match status" value="1"/>
</dbReference>
<dbReference type="InterPro" id="IPR006217">
    <property type="entry name" value="PSII_cyt_b559_asu"/>
</dbReference>
<dbReference type="InterPro" id="IPR037025">
    <property type="entry name" value="PSII_cyt_b559_asu_sf"/>
</dbReference>
<dbReference type="InterPro" id="IPR006216">
    <property type="entry name" value="PSII_cyt_b559_CS"/>
</dbReference>
<dbReference type="InterPro" id="IPR013081">
    <property type="entry name" value="PSII_cyt_b559_N"/>
</dbReference>
<dbReference type="InterPro" id="IPR013082">
    <property type="entry name" value="PSII_cytb559_asu_lum"/>
</dbReference>
<dbReference type="NCBIfam" id="TIGR01332">
    <property type="entry name" value="cyt_b559_alpha"/>
    <property type="match status" value="1"/>
</dbReference>
<dbReference type="PANTHER" id="PTHR33391">
    <property type="entry name" value="CYTOCHROME B559 SUBUNIT BETA-RELATED"/>
    <property type="match status" value="1"/>
</dbReference>
<dbReference type="PANTHER" id="PTHR33391:SF9">
    <property type="entry name" value="CYTOCHROME B559 SUBUNIT BETA-RELATED"/>
    <property type="match status" value="1"/>
</dbReference>
<dbReference type="Pfam" id="PF00283">
    <property type="entry name" value="Cytochrom_B559"/>
    <property type="match status" value="1"/>
</dbReference>
<dbReference type="Pfam" id="PF00284">
    <property type="entry name" value="Cytochrom_B559a"/>
    <property type="match status" value="1"/>
</dbReference>
<dbReference type="PIRSF" id="PIRSF000036">
    <property type="entry name" value="PsbE"/>
    <property type="match status" value="1"/>
</dbReference>
<dbReference type="SUPFAM" id="SSF161045">
    <property type="entry name" value="Cytochrome b559 subunits"/>
    <property type="match status" value="1"/>
</dbReference>
<dbReference type="PROSITE" id="PS00537">
    <property type="entry name" value="CYTOCHROME_B559"/>
    <property type="match status" value="1"/>
</dbReference>
<proteinExistence type="inferred from homology"/>
<gene>
    <name evidence="1" type="primary">psbE</name>
</gene>